<evidence type="ECO:0000269" key="1">
    <source>
    </source>
</evidence>
<evidence type="ECO:0000269" key="2">
    <source>
    </source>
</evidence>
<evidence type="ECO:0000269" key="3">
    <source>
    </source>
</evidence>
<evidence type="ECO:0000269" key="4">
    <source ref="6"/>
</evidence>
<evidence type="ECO:0000305" key="5"/>
<evidence type="ECO:0007829" key="6">
    <source>
        <dbReference type="PDB" id="1DHK"/>
    </source>
</evidence>
<dbReference type="EMBL" id="J01261">
    <property type="protein sequence ID" value="AAA33769.1"/>
    <property type="molecule type" value="Genomic_DNA"/>
</dbReference>
<dbReference type="EMBL" id="AJ439614">
    <property type="protein sequence ID" value="CAD28835.1"/>
    <property type="molecule type" value="Genomic_DNA"/>
</dbReference>
<dbReference type="PIR" id="A03365">
    <property type="entry name" value="LNFB"/>
</dbReference>
<dbReference type="PDB" id="1DHK">
    <property type="method" value="X-ray"/>
    <property type="resolution" value="1.85 A"/>
    <property type="chains" value="B=24-246"/>
</dbReference>
<dbReference type="PDB" id="1VIW">
    <property type="method" value="X-ray"/>
    <property type="resolution" value="3.00 A"/>
    <property type="chains" value="B=24-228"/>
</dbReference>
<dbReference type="PDBsum" id="1DHK"/>
<dbReference type="PDBsum" id="1VIW"/>
<dbReference type="SMR" id="P02873"/>
<dbReference type="MINT" id="P02873"/>
<dbReference type="Allergome" id="2946">
    <property type="allergen name" value="Pha v aAI"/>
</dbReference>
<dbReference type="Allergome" id="8208">
    <property type="allergen name" value="Pha v aAI.0101"/>
</dbReference>
<dbReference type="GlyConnect" id="26">
    <property type="glycosylation" value="7 N-Linked glycans"/>
</dbReference>
<dbReference type="GlyConnect" id="27">
    <property type="glycosylation" value="8 N-Linked glycans"/>
</dbReference>
<dbReference type="GlyCosmos" id="P02873">
    <property type="glycosylation" value="3 sites, 14 glycans"/>
</dbReference>
<dbReference type="iPTMnet" id="P02873"/>
<dbReference type="EvolutionaryTrace" id="P02873"/>
<dbReference type="GO" id="GO:0015066">
    <property type="term" value="F:alpha-amylase inhibitor activity"/>
    <property type="evidence" value="ECO:0007669"/>
    <property type="project" value="UniProtKB-KW"/>
</dbReference>
<dbReference type="GO" id="GO:0030246">
    <property type="term" value="F:carbohydrate binding"/>
    <property type="evidence" value="ECO:0007669"/>
    <property type="project" value="UniProtKB-KW"/>
</dbReference>
<dbReference type="CDD" id="cd06899">
    <property type="entry name" value="lectin_legume_LecRK_Arcelin_ConA"/>
    <property type="match status" value="1"/>
</dbReference>
<dbReference type="Gene3D" id="2.60.120.200">
    <property type="match status" value="1"/>
</dbReference>
<dbReference type="InterPro" id="IPR013320">
    <property type="entry name" value="ConA-like_dom_sf"/>
</dbReference>
<dbReference type="InterPro" id="IPR016363">
    <property type="entry name" value="L-lectin"/>
</dbReference>
<dbReference type="InterPro" id="IPR000985">
    <property type="entry name" value="Lectin_LegA_CS"/>
</dbReference>
<dbReference type="InterPro" id="IPR019825">
    <property type="entry name" value="Lectin_legB_Mn/Ca_BS"/>
</dbReference>
<dbReference type="InterPro" id="IPR001220">
    <property type="entry name" value="Legume_lectin_dom"/>
</dbReference>
<dbReference type="InterPro" id="IPR050258">
    <property type="entry name" value="Leguminous_Lectin"/>
</dbReference>
<dbReference type="PANTHER" id="PTHR32401">
    <property type="entry name" value="CONCANAVALIN A-LIKE LECTIN FAMILY PROTEIN"/>
    <property type="match status" value="1"/>
</dbReference>
<dbReference type="PANTHER" id="PTHR32401:SF45">
    <property type="entry name" value="LECTIN"/>
    <property type="match status" value="1"/>
</dbReference>
<dbReference type="Pfam" id="PF00139">
    <property type="entry name" value="Lectin_legB"/>
    <property type="match status" value="2"/>
</dbReference>
<dbReference type="PIRSF" id="PIRSF002690">
    <property type="entry name" value="L-type_lectin_plant"/>
    <property type="match status" value="1"/>
</dbReference>
<dbReference type="SUPFAM" id="SSF49899">
    <property type="entry name" value="Concanavalin A-like lectins/glucanases"/>
    <property type="match status" value="1"/>
</dbReference>
<dbReference type="PROSITE" id="PS00308">
    <property type="entry name" value="LECTIN_LEGUME_ALPHA"/>
    <property type="match status" value="1"/>
</dbReference>
<dbReference type="PROSITE" id="PS00307">
    <property type="entry name" value="LECTIN_LEGUME_BETA"/>
    <property type="match status" value="1"/>
</dbReference>
<organism>
    <name type="scientific">Phaseolus vulgaris</name>
    <name type="common">Kidney bean</name>
    <name type="synonym">French bean</name>
    <dbReference type="NCBI Taxonomy" id="3885"/>
    <lineage>
        <taxon>Eukaryota</taxon>
        <taxon>Viridiplantae</taxon>
        <taxon>Streptophyta</taxon>
        <taxon>Embryophyta</taxon>
        <taxon>Tracheophyta</taxon>
        <taxon>Spermatophyta</taxon>
        <taxon>Magnoliopsida</taxon>
        <taxon>eudicotyledons</taxon>
        <taxon>Gunneridae</taxon>
        <taxon>Pentapetalae</taxon>
        <taxon>rosids</taxon>
        <taxon>fabids</taxon>
        <taxon>Fabales</taxon>
        <taxon>Fabaceae</taxon>
        <taxon>Papilionoideae</taxon>
        <taxon>50 kb inversion clade</taxon>
        <taxon>NPAAA clade</taxon>
        <taxon>indigoferoid/millettioid clade</taxon>
        <taxon>Phaseoleae</taxon>
        <taxon>Phaseolus</taxon>
    </lineage>
</organism>
<reference key="1">
    <citation type="journal article" date="1984" name="J. Mol. Appl. Genet.">
        <title>Structure of a chromosomal Phaseolus vulgaris lectin gene and its transcript.</title>
        <authorList>
            <person name="Hoffman L.M."/>
        </authorList>
    </citation>
    <scope>NUCLEOTIDE SEQUENCE [GENOMIC DNA]</scope>
    <source>
        <strain>cv. Tendergreen</strain>
    </source>
</reference>
<reference key="2">
    <citation type="journal article" date="1982" name="Nucleic Acids Res.">
        <title>Molecular cloning of Phaseolus vulgaris lectin mRNA and use of cDNA as a probe to estimate lectin transcript levels in various tissues.</title>
        <authorList>
            <person name="Hoffman L.M."/>
            <person name="Ma Y."/>
            <person name="Barker R.F."/>
        </authorList>
    </citation>
    <scope>NUCLEOTIDE SEQUENCE [GENOMIC DNA]</scope>
    <source>
        <strain>cv. Tendergreen</strain>
    </source>
</reference>
<reference key="3">
    <citation type="submission" date="2002-03" db="EMBL/GenBank/DDBJ databases">
        <title>Arcelin and other members of lectin family in wild Phaseolus vulgaris.</title>
        <authorList>
            <person name="Lioi L."/>
            <person name="Galasso I."/>
            <person name="Lanave C."/>
            <person name="Sparvoli F."/>
            <person name="Bollini R."/>
        </authorList>
    </citation>
    <scope>NUCLEOTIDE SEQUENCE [GENOMIC DNA] OF 3-246</scope>
    <source>
        <tissue>Leaf</tissue>
    </source>
</reference>
<reference key="4">
    <citation type="journal article" date="1989" name="Proc. Natl. Acad. Sci. U.S.A.">
        <title>A lectin gene encodes the alpha-amylase inhibitor of the common bean.</title>
        <authorList>
            <person name="Moreno J."/>
            <person name="Chrispeels M.J."/>
        </authorList>
    </citation>
    <scope>PROTEIN SEQUENCE OF 24-34 AND 101-115</scope>
    <source>
        <strain>cv. Greensleeves</strain>
        <tissue>Seed</tissue>
    </source>
</reference>
<reference key="5">
    <citation type="journal article" date="1993" name="Biosci. Biotechnol. Biochem.">
        <title>Isolation and characterization of the subunits of a heat-labile alpha-amylase inhibitor from Phaseolus vulgaris white kidney bean.</title>
        <authorList>
            <person name="Yamaguchi H."/>
        </authorList>
    </citation>
    <scope>PROTEIN SEQUENCE OF 24-32 AND 101-109</scope>
    <source>
        <strain>cv. Tebo</strain>
        <tissue>Seed</tissue>
    </source>
</reference>
<reference key="6">
    <citation type="submission" date="2003-12" db="UniProtKB">
        <authorList>
            <person name="Kluh I."/>
            <person name="Horn M."/>
            <person name="Voburka Z."/>
        </authorList>
    </citation>
    <scope>PROTEIN SEQUENCE OF 24-99 AND 101-231</scope>
    <scope>FUNCTION</scope>
    <scope>SUBUNIT</scope>
    <scope>GLYCOSYLATION</scope>
    <source>
        <strain>cv. Magna</strain>
        <tissue>Seed</tissue>
    </source>
</reference>
<reference key="7">
    <citation type="journal article" date="1995" name="Glycobiology">
        <title>Location of the active site of the bean alpha-amylase inhibitor and involvement of a Trp, Arg, Tyr triad.</title>
        <authorList>
            <person name="Mirkov T.E."/>
            <person name="Evans S.V."/>
            <person name="Wahlstrom J."/>
            <person name="Gomez L."/>
            <person name="Young N.M."/>
            <person name="Chrispeels M.J."/>
        </authorList>
    </citation>
    <scope>CHARACTERIZATION</scope>
</reference>
<reference key="8">
    <citation type="journal article" date="1999" name="FEBS Lett.">
        <title>Post-translational processing of two alpha-amylase inhibitors and an arcelin from the common bean, Phaseolus vulgaris.</title>
        <authorList>
            <person name="Young N.M."/>
            <person name="Thibault P."/>
            <person name="Watson D.C."/>
            <person name="Chrispeels M.J."/>
        </authorList>
    </citation>
    <scope>PROTEOLYTIC PROCESSING OF C-TERMINAL</scope>
    <scope>GLYCOSYLATION AT ASN-35; ASN-88 AND ASN-163</scope>
</reference>
<reference key="9">
    <citation type="journal article" date="1996" name="Structure">
        <title>Substrate mimicry in the active center of a mammalian alpha-amylase: structural analysis of an enzyme-inhibitor complex.</title>
        <authorList>
            <person name="Bompard-Gilles C."/>
            <person name="Rousseau P."/>
            <person name="Rouge P."/>
            <person name="Payan F."/>
        </authorList>
    </citation>
    <scope>X-RAY CRYSTALLOGRAPHY (1.85 ANGSTROMS) OF COMPLEX WITH PIG ALPHA-AMYLASE</scope>
</reference>
<proteinExistence type="evidence at protein level"/>
<keyword id="KW-0002">3D-structure</keyword>
<keyword id="KW-0022">Alpha-amylase inhibitor</keyword>
<keyword id="KW-0903">Direct protein sequencing</keyword>
<keyword id="KW-0325">Glycoprotein</keyword>
<keyword id="KW-0430">Lectin</keyword>
<keyword id="KW-0732">Signal</keyword>
<protein>
    <recommendedName>
        <fullName>Alpha-amylase inhibitor 1</fullName>
        <shortName>Alpha-AI-1</shortName>
        <shortName>Alpha-AI1</shortName>
    </recommendedName>
    <alternativeName>
        <fullName>Lectin</fullName>
    </alternativeName>
    <component>
        <recommendedName>
            <fullName>Alpha-amylase inhibitor 1 chain 1</fullName>
        </recommendedName>
    </component>
    <component>
        <recommendedName>
            <fullName>Alpha-amylase inhibitor 1 chain 2</fullName>
        </recommendedName>
    </component>
</protein>
<feature type="signal peptide" evidence="2 3 4">
    <location>
        <begin position="1"/>
        <end position="23"/>
    </location>
</feature>
<feature type="chain" id="PRO_0000017627" description="Alpha-amylase inhibitor 1 chain 1">
    <location>
        <begin position="24"/>
        <end position="100"/>
    </location>
</feature>
<feature type="chain" id="PRO_0000017628" description="Alpha-amylase inhibitor 1 chain 2">
    <location>
        <begin position="101"/>
        <end position="239"/>
    </location>
</feature>
<feature type="propeptide" id="PRO_0000017629">
    <location>
        <begin position="240"/>
        <end position="246"/>
    </location>
</feature>
<feature type="glycosylation site" description="N-linked (GlcNAc...) asparagine" evidence="1">
    <location>
        <position position="35"/>
    </location>
</feature>
<feature type="glycosylation site" description="N-linked (GlcNAc...) asparagine" evidence="1">
    <location>
        <position position="88"/>
    </location>
</feature>
<feature type="glycosylation site" description="N-linked (GlcNAc...) asparagine" evidence="1">
    <location>
        <position position="163"/>
    </location>
</feature>
<feature type="sequence conflict" description="In Ref. 5; AA sequence." evidence="5" ref="5">
    <original>I</original>
    <variation>N</variation>
    <location>
        <position position="30"/>
    </location>
</feature>
<feature type="sequence conflict" description="In Ref. 3; CAD28835." evidence="5" ref="3">
    <original>Q</original>
    <variation>R</variation>
    <location>
        <position position="73"/>
    </location>
</feature>
<feature type="sequence conflict" description="In Ref. 3; CAD28835." evidence="5" ref="3">
    <original>K</original>
    <variation>E</variation>
    <location>
        <position position="142"/>
    </location>
</feature>
<feature type="sequence conflict" description="In Ref. 2." evidence="5" ref="2">
    <original>D</original>
    <variation>N</variation>
    <location>
        <position position="196"/>
    </location>
</feature>
<feature type="strand" evidence="6">
    <location>
        <begin position="28"/>
        <end position="33"/>
    </location>
</feature>
<feature type="helix" evidence="6">
    <location>
        <begin position="36"/>
        <end position="38"/>
    </location>
</feature>
<feature type="strand" evidence="6">
    <location>
        <begin position="39"/>
        <end position="47"/>
    </location>
</feature>
<feature type="strand" evidence="6">
    <location>
        <begin position="53"/>
        <end position="58"/>
    </location>
</feature>
<feature type="strand" evidence="6">
    <location>
        <begin position="60"/>
        <end position="70"/>
    </location>
</feature>
<feature type="strand" evidence="6">
    <location>
        <begin position="72"/>
        <end position="75"/>
    </location>
</feature>
<feature type="turn" evidence="6">
    <location>
        <begin position="77"/>
        <end position="79"/>
    </location>
</feature>
<feature type="strand" evidence="6">
    <location>
        <begin position="84"/>
        <end position="94"/>
    </location>
</feature>
<feature type="strand" evidence="6">
    <location>
        <begin position="103"/>
        <end position="111"/>
    </location>
</feature>
<feature type="strand" evidence="6">
    <location>
        <begin position="121"/>
        <end position="126"/>
    </location>
</feature>
<feature type="turn" evidence="6">
    <location>
        <begin position="127"/>
        <end position="130"/>
    </location>
</feature>
<feature type="strand" evidence="6">
    <location>
        <begin position="131"/>
        <end position="136"/>
    </location>
</feature>
<feature type="strand" evidence="6">
    <location>
        <begin position="139"/>
        <end position="145"/>
    </location>
</feature>
<feature type="helix" evidence="6">
    <location>
        <begin position="148"/>
        <end position="150"/>
    </location>
</feature>
<feature type="turn" evidence="6">
    <location>
        <begin position="151"/>
        <end position="153"/>
    </location>
</feature>
<feature type="strand" evidence="6">
    <location>
        <begin position="156"/>
        <end position="163"/>
    </location>
</feature>
<feature type="turn" evidence="6">
    <location>
        <begin position="164"/>
        <end position="167"/>
    </location>
</feature>
<feature type="strand" evidence="6">
    <location>
        <begin position="168"/>
        <end position="174"/>
    </location>
</feature>
<feature type="turn" evidence="6">
    <location>
        <begin position="176"/>
        <end position="178"/>
    </location>
</feature>
<feature type="strand" evidence="6">
    <location>
        <begin position="181"/>
        <end position="187"/>
    </location>
</feature>
<feature type="helix" evidence="6">
    <location>
        <begin position="193"/>
        <end position="195"/>
    </location>
</feature>
<feature type="strand" evidence="6">
    <location>
        <begin position="196"/>
        <end position="206"/>
    </location>
</feature>
<feature type="helix" evidence="6">
    <location>
        <begin position="209"/>
        <end position="211"/>
    </location>
</feature>
<feature type="strand" evidence="6">
    <location>
        <begin position="215"/>
        <end position="226"/>
    </location>
</feature>
<gene>
    <name type="primary">LLP</name>
    <name type="synonym">Alpha-AI1</name>
</gene>
<comment type="function">
    <text evidence="4">Lectin and alpha-amylase inhibitor. Acts as a defensive protein against insects.</text>
</comment>
<comment type="subunit">
    <text evidence="4">Heterodimer of chain 1 and chain 2.</text>
</comment>
<comment type="PTM">
    <text evidence="1">Proteolytic processing yields active form.</text>
</comment>
<comment type="biotechnology">
    <text>Sold as a diet aid under the name of 'Phaseolamin' or 'Phase 2'.</text>
</comment>
<comment type="similarity">
    <text evidence="5">Belongs to the leguminous lectin family.</text>
</comment>
<sequence>MIMASSKLLSLALFLALLSHANSATETSFIIDAFNKTNLILQGDATVSSNGNLQLSYNSYDSMSRAFYSAPIQIRDSTTGNVASFDTNFTMNIRTHRQANSAVGLDFVLVPVQPESKGDTVTVEFDTFLSRISIDVNNNDIKSVPWDVHDYDGQNAEVRITYNSSTKVFSVSLSNPSTGKSNNVSTTVELEKEVYDWVSVGFSATSGAYQWSYETHDVLSWSFSSKFINLKDQKSERSNIVLNKIL</sequence>
<accession>P02873</accession>
<accession>Q8RVY2</accession>
<name>LEA1_PHAVU</name>